<accession>C3MAX1</accession>
<feature type="chain" id="PRO_1000133857" description="Large ribosomal subunit protein bL12">
    <location>
        <begin position="1"/>
        <end position="127"/>
    </location>
</feature>
<proteinExistence type="inferred from homology"/>
<organism>
    <name type="scientific">Sinorhizobium fredii (strain NBRC 101917 / NGR234)</name>
    <dbReference type="NCBI Taxonomy" id="394"/>
    <lineage>
        <taxon>Bacteria</taxon>
        <taxon>Pseudomonadati</taxon>
        <taxon>Pseudomonadota</taxon>
        <taxon>Alphaproteobacteria</taxon>
        <taxon>Hyphomicrobiales</taxon>
        <taxon>Rhizobiaceae</taxon>
        <taxon>Sinorhizobium/Ensifer group</taxon>
        <taxon>Sinorhizobium</taxon>
    </lineage>
</organism>
<gene>
    <name evidence="1" type="primary">rplL</name>
    <name type="ordered locus">NGR_c11820</name>
</gene>
<name>RL7_SINFN</name>
<evidence type="ECO:0000255" key="1">
    <source>
        <dbReference type="HAMAP-Rule" id="MF_00368"/>
    </source>
</evidence>
<evidence type="ECO:0000305" key="2"/>
<sequence length="127" mass="12838">MADLAKIVEDLSSLTVLEAAELSKLLEEKWGVSAAAPVAVAAAGGAAGGAAAAAEEEKTEFDVILTDAGANKINVIKEVRAITGLGLKEAKDLVEGAPKAVKEAVSKAEAADLKKKLEDAGAKVDVK</sequence>
<keyword id="KW-1185">Reference proteome</keyword>
<keyword id="KW-0687">Ribonucleoprotein</keyword>
<keyword id="KW-0689">Ribosomal protein</keyword>
<protein>
    <recommendedName>
        <fullName evidence="1">Large ribosomal subunit protein bL12</fullName>
    </recommendedName>
    <alternativeName>
        <fullName evidence="2">50S ribosomal protein L7/L12</fullName>
    </alternativeName>
</protein>
<dbReference type="EMBL" id="CP001389">
    <property type="protein sequence ID" value="ACP24964.1"/>
    <property type="molecule type" value="Genomic_DNA"/>
</dbReference>
<dbReference type="RefSeq" id="WP_012707747.1">
    <property type="nucleotide sequence ID" value="NC_012587.1"/>
</dbReference>
<dbReference type="RefSeq" id="YP_002825717.1">
    <property type="nucleotide sequence ID" value="NC_012587.1"/>
</dbReference>
<dbReference type="SMR" id="C3MAX1"/>
<dbReference type="STRING" id="394.NGR_c11820"/>
<dbReference type="KEGG" id="rhi:NGR_c11820"/>
<dbReference type="PATRIC" id="fig|394.7.peg.3998"/>
<dbReference type="eggNOG" id="COG0222">
    <property type="taxonomic scope" value="Bacteria"/>
</dbReference>
<dbReference type="HOGENOM" id="CLU_086499_3_0_5"/>
<dbReference type="OrthoDB" id="9811748at2"/>
<dbReference type="Proteomes" id="UP000001054">
    <property type="component" value="Chromosome"/>
</dbReference>
<dbReference type="GO" id="GO:0022625">
    <property type="term" value="C:cytosolic large ribosomal subunit"/>
    <property type="evidence" value="ECO:0007669"/>
    <property type="project" value="TreeGrafter"/>
</dbReference>
<dbReference type="GO" id="GO:0003729">
    <property type="term" value="F:mRNA binding"/>
    <property type="evidence" value="ECO:0007669"/>
    <property type="project" value="TreeGrafter"/>
</dbReference>
<dbReference type="GO" id="GO:0003735">
    <property type="term" value="F:structural constituent of ribosome"/>
    <property type="evidence" value="ECO:0007669"/>
    <property type="project" value="InterPro"/>
</dbReference>
<dbReference type="GO" id="GO:0006412">
    <property type="term" value="P:translation"/>
    <property type="evidence" value="ECO:0007669"/>
    <property type="project" value="UniProtKB-UniRule"/>
</dbReference>
<dbReference type="CDD" id="cd00387">
    <property type="entry name" value="Ribosomal_L7_L12"/>
    <property type="match status" value="1"/>
</dbReference>
<dbReference type="FunFam" id="1.20.5.710:FF:000007">
    <property type="entry name" value="50S ribosomal protein L7/L12"/>
    <property type="match status" value="1"/>
</dbReference>
<dbReference type="FunFam" id="3.30.1390.10:FF:000001">
    <property type="entry name" value="50S ribosomal protein L7/L12"/>
    <property type="match status" value="1"/>
</dbReference>
<dbReference type="Gene3D" id="3.30.1390.10">
    <property type="match status" value="1"/>
</dbReference>
<dbReference type="Gene3D" id="1.20.5.710">
    <property type="entry name" value="Single helix bin"/>
    <property type="match status" value="1"/>
</dbReference>
<dbReference type="HAMAP" id="MF_00368">
    <property type="entry name" value="Ribosomal_bL12"/>
    <property type="match status" value="1"/>
</dbReference>
<dbReference type="InterPro" id="IPR000206">
    <property type="entry name" value="Ribosomal_bL12"/>
</dbReference>
<dbReference type="InterPro" id="IPR013823">
    <property type="entry name" value="Ribosomal_bL12_C"/>
</dbReference>
<dbReference type="InterPro" id="IPR014719">
    <property type="entry name" value="Ribosomal_bL12_C/ClpS-like"/>
</dbReference>
<dbReference type="InterPro" id="IPR008932">
    <property type="entry name" value="Ribosomal_bL12_oligo"/>
</dbReference>
<dbReference type="InterPro" id="IPR036235">
    <property type="entry name" value="Ribosomal_bL12_oligo_N_sf"/>
</dbReference>
<dbReference type="NCBIfam" id="TIGR00855">
    <property type="entry name" value="L12"/>
    <property type="match status" value="1"/>
</dbReference>
<dbReference type="PANTHER" id="PTHR45987">
    <property type="entry name" value="39S RIBOSOMAL PROTEIN L12"/>
    <property type="match status" value="1"/>
</dbReference>
<dbReference type="PANTHER" id="PTHR45987:SF4">
    <property type="entry name" value="LARGE RIBOSOMAL SUBUNIT PROTEIN BL12M"/>
    <property type="match status" value="1"/>
</dbReference>
<dbReference type="Pfam" id="PF00542">
    <property type="entry name" value="Ribosomal_L12"/>
    <property type="match status" value="1"/>
</dbReference>
<dbReference type="Pfam" id="PF16320">
    <property type="entry name" value="Ribosomal_L12_N"/>
    <property type="match status" value="1"/>
</dbReference>
<dbReference type="SUPFAM" id="SSF54736">
    <property type="entry name" value="ClpS-like"/>
    <property type="match status" value="1"/>
</dbReference>
<dbReference type="SUPFAM" id="SSF48300">
    <property type="entry name" value="Ribosomal protein L7/12, oligomerisation (N-terminal) domain"/>
    <property type="match status" value="1"/>
</dbReference>
<comment type="function">
    <text evidence="1">Forms part of the ribosomal stalk which helps the ribosome interact with GTP-bound translation factors. Is thus essential for accurate translation.</text>
</comment>
<comment type="subunit">
    <text evidence="1">Homodimer. Part of the ribosomal stalk of the 50S ribosomal subunit. Forms a multimeric L10(L12)X complex, where L10 forms an elongated spine to which 2 to 4 L12 dimers bind in a sequential fashion. Binds GTP-bound translation factors.</text>
</comment>
<comment type="similarity">
    <text evidence="1">Belongs to the bacterial ribosomal protein bL12 family.</text>
</comment>
<reference key="1">
    <citation type="journal article" date="2009" name="Appl. Environ. Microbiol.">
        <title>Rhizobium sp. strain NGR234 possesses a remarkable number of secretion systems.</title>
        <authorList>
            <person name="Schmeisser C."/>
            <person name="Liesegang H."/>
            <person name="Krysciak D."/>
            <person name="Bakkou N."/>
            <person name="Le Quere A."/>
            <person name="Wollherr A."/>
            <person name="Heinemeyer I."/>
            <person name="Morgenstern B."/>
            <person name="Pommerening-Roeser A."/>
            <person name="Flores M."/>
            <person name="Palacios R."/>
            <person name="Brenner S."/>
            <person name="Gottschalk G."/>
            <person name="Schmitz R.A."/>
            <person name="Broughton W.J."/>
            <person name="Perret X."/>
            <person name="Strittmatter A.W."/>
            <person name="Streit W.R."/>
        </authorList>
    </citation>
    <scope>NUCLEOTIDE SEQUENCE [LARGE SCALE GENOMIC DNA]</scope>
    <source>
        <strain>NBRC 101917 / NGR234</strain>
    </source>
</reference>